<evidence type="ECO:0000255" key="1">
    <source>
        <dbReference type="HAMAP-Rule" id="MF_00313"/>
    </source>
</evidence>
<accession>B8E920</accession>
<organism>
    <name type="scientific">Shewanella baltica (strain OS223)</name>
    <dbReference type="NCBI Taxonomy" id="407976"/>
    <lineage>
        <taxon>Bacteria</taxon>
        <taxon>Pseudomonadati</taxon>
        <taxon>Pseudomonadota</taxon>
        <taxon>Gammaproteobacteria</taxon>
        <taxon>Alteromonadales</taxon>
        <taxon>Shewanellaceae</taxon>
        <taxon>Shewanella</taxon>
    </lineage>
</organism>
<sequence>MPELALLEEVVDKVRPLLGQGKVADYIPALASVDAGKLGIAVTTVDGETLGAGDYLEPFSIQSISKVFSLTLALTLYEEAEIWSRVGKEPSGHSFNSLVQVELERGKPRNPFINAGALVIADLLQSRLGAPKHRMLELVRQLSQNDKVCFDKQVADSEYQHSARNAAIAYLMKSFGNFQGDVDTVLRTYFHYCALKMNCADLSKAMLYLANRGKSITGTELISQVQTRQLNALLATSGLYDGAGEFAYRVGMPGKSGVGGGIIAVIPGELSICVWSPELDGNGNSLAGTAMLEHLSQRLGRSIF</sequence>
<comment type="catalytic activity">
    <reaction evidence="1">
        <text>L-glutamine + H2O = L-glutamate + NH4(+)</text>
        <dbReference type="Rhea" id="RHEA:15889"/>
        <dbReference type="ChEBI" id="CHEBI:15377"/>
        <dbReference type="ChEBI" id="CHEBI:28938"/>
        <dbReference type="ChEBI" id="CHEBI:29985"/>
        <dbReference type="ChEBI" id="CHEBI:58359"/>
        <dbReference type="EC" id="3.5.1.2"/>
    </reaction>
</comment>
<comment type="subunit">
    <text evidence="1">Homotetramer.</text>
</comment>
<comment type="similarity">
    <text evidence="1">Belongs to the glutaminase family.</text>
</comment>
<dbReference type="EC" id="3.5.1.2" evidence="1"/>
<dbReference type="EMBL" id="CP001252">
    <property type="protein sequence ID" value="ACK45836.1"/>
    <property type="molecule type" value="Genomic_DNA"/>
</dbReference>
<dbReference type="SMR" id="B8E920"/>
<dbReference type="KEGG" id="sbp:Sbal223_1328"/>
<dbReference type="HOGENOM" id="CLU_027932_1_1_6"/>
<dbReference type="Proteomes" id="UP000002507">
    <property type="component" value="Chromosome"/>
</dbReference>
<dbReference type="GO" id="GO:0004359">
    <property type="term" value="F:glutaminase activity"/>
    <property type="evidence" value="ECO:0007669"/>
    <property type="project" value="UniProtKB-UniRule"/>
</dbReference>
<dbReference type="GO" id="GO:0006537">
    <property type="term" value="P:glutamate biosynthetic process"/>
    <property type="evidence" value="ECO:0007669"/>
    <property type="project" value="TreeGrafter"/>
</dbReference>
<dbReference type="GO" id="GO:0006543">
    <property type="term" value="P:glutamine catabolic process"/>
    <property type="evidence" value="ECO:0007669"/>
    <property type="project" value="TreeGrafter"/>
</dbReference>
<dbReference type="FunFam" id="3.40.710.10:FF:000005">
    <property type="entry name" value="Glutaminase"/>
    <property type="match status" value="1"/>
</dbReference>
<dbReference type="Gene3D" id="3.40.710.10">
    <property type="entry name" value="DD-peptidase/beta-lactamase superfamily"/>
    <property type="match status" value="1"/>
</dbReference>
<dbReference type="HAMAP" id="MF_00313">
    <property type="entry name" value="Glutaminase"/>
    <property type="match status" value="1"/>
</dbReference>
<dbReference type="InterPro" id="IPR012338">
    <property type="entry name" value="Beta-lactam/transpept-like"/>
</dbReference>
<dbReference type="InterPro" id="IPR015868">
    <property type="entry name" value="Glutaminase"/>
</dbReference>
<dbReference type="NCBIfam" id="TIGR03814">
    <property type="entry name" value="Gln_ase"/>
    <property type="match status" value="1"/>
</dbReference>
<dbReference type="NCBIfam" id="NF002132">
    <property type="entry name" value="PRK00971.1-1"/>
    <property type="match status" value="1"/>
</dbReference>
<dbReference type="NCBIfam" id="NF002133">
    <property type="entry name" value="PRK00971.1-2"/>
    <property type="match status" value="1"/>
</dbReference>
<dbReference type="PANTHER" id="PTHR12544">
    <property type="entry name" value="GLUTAMINASE"/>
    <property type="match status" value="1"/>
</dbReference>
<dbReference type="PANTHER" id="PTHR12544:SF29">
    <property type="entry name" value="GLUTAMINASE"/>
    <property type="match status" value="1"/>
</dbReference>
<dbReference type="Pfam" id="PF04960">
    <property type="entry name" value="Glutaminase"/>
    <property type="match status" value="1"/>
</dbReference>
<dbReference type="SUPFAM" id="SSF56601">
    <property type="entry name" value="beta-lactamase/transpeptidase-like"/>
    <property type="match status" value="1"/>
</dbReference>
<keyword id="KW-0378">Hydrolase</keyword>
<proteinExistence type="inferred from homology"/>
<gene>
    <name evidence="1" type="primary">glsA</name>
    <name type="ordered locus">Sbal223_1328</name>
</gene>
<protein>
    <recommendedName>
        <fullName evidence="1">Glutaminase</fullName>
        <ecNumber evidence="1">3.5.1.2</ecNumber>
    </recommendedName>
</protein>
<name>GLSA_SHEB2</name>
<reference key="1">
    <citation type="submission" date="2008-12" db="EMBL/GenBank/DDBJ databases">
        <title>Complete sequence of chromosome of Shewanella baltica OS223.</title>
        <authorList>
            <consortium name="US DOE Joint Genome Institute"/>
            <person name="Lucas S."/>
            <person name="Copeland A."/>
            <person name="Lapidus A."/>
            <person name="Glavina del Rio T."/>
            <person name="Dalin E."/>
            <person name="Tice H."/>
            <person name="Bruce D."/>
            <person name="Goodwin L."/>
            <person name="Pitluck S."/>
            <person name="Chertkov O."/>
            <person name="Meincke L."/>
            <person name="Brettin T."/>
            <person name="Detter J.C."/>
            <person name="Han C."/>
            <person name="Kuske C.R."/>
            <person name="Larimer F."/>
            <person name="Land M."/>
            <person name="Hauser L."/>
            <person name="Kyrpides N."/>
            <person name="Ovchinnikova G."/>
            <person name="Brettar I."/>
            <person name="Rodrigues J."/>
            <person name="Konstantinidis K."/>
            <person name="Tiedje J."/>
        </authorList>
    </citation>
    <scope>NUCLEOTIDE SEQUENCE [LARGE SCALE GENOMIC DNA]</scope>
    <source>
        <strain>OS223</strain>
    </source>
</reference>
<feature type="chain" id="PRO_1000132911" description="Glutaminase">
    <location>
        <begin position="1"/>
        <end position="304"/>
    </location>
</feature>
<feature type="binding site" evidence="1">
    <location>
        <position position="63"/>
    </location>
    <ligand>
        <name>substrate</name>
    </ligand>
</feature>
<feature type="binding site" evidence="1">
    <location>
        <position position="114"/>
    </location>
    <ligand>
        <name>substrate</name>
    </ligand>
</feature>
<feature type="binding site" evidence="1">
    <location>
        <position position="158"/>
    </location>
    <ligand>
        <name>substrate</name>
    </ligand>
</feature>
<feature type="binding site" evidence="1">
    <location>
        <position position="165"/>
    </location>
    <ligand>
        <name>substrate</name>
    </ligand>
</feature>
<feature type="binding site" evidence="1">
    <location>
        <position position="189"/>
    </location>
    <ligand>
        <name>substrate</name>
    </ligand>
</feature>
<feature type="binding site" evidence="1">
    <location>
        <position position="240"/>
    </location>
    <ligand>
        <name>substrate</name>
    </ligand>
</feature>
<feature type="binding site" evidence="1">
    <location>
        <position position="258"/>
    </location>
    <ligand>
        <name>substrate</name>
    </ligand>
</feature>